<keyword id="KW-0227">DNA damage</keyword>
<keyword id="KW-0234">DNA repair</keyword>
<keyword id="KW-1185">Reference proteome</keyword>
<reference key="1">
    <citation type="journal article" date="2003" name="Nature">
        <title>Genome sequence of Bacillus cereus and comparative analysis with Bacillus anthracis.</title>
        <authorList>
            <person name="Ivanova N."/>
            <person name="Sorokin A."/>
            <person name="Anderson I."/>
            <person name="Galleron N."/>
            <person name="Candelon B."/>
            <person name="Kapatral V."/>
            <person name="Bhattacharyya A."/>
            <person name="Reznik G."/>
            <person name="Mikhailova N."/>
            <person name="Lapidus A."/>
            <person name="Chu L."/>
            <person name="Mazur M."/>
            <person name="Goltsman E."/>
            <person name="Larsen N."/>
            <person name="D'Souza M."/>
            <person name="Walunas T."/>
            <person name="Grechkin Y."/>
            <person name="Pusch G."/>
            <person name="Haselkorn R."/>
            <person name="Fonstein M."/>
            <person name="Ehrlich S.D."/>
            <person name="Overbeek R."/>
            <person name="Kyrpides N.C."/>
        </authorList>
    </citation>
    <scope>NUCLEOTIDE SEQUENCE [LARGE SCALE GENOMIC DNA]</scope>
    <source>
        <strain>ATCC 14579 / DSM 31 / CCUG 7414 / JCM 2152 / NBRC 15305 / NCIMB 9373 / NCTC 2599 / NRRL B-3711</strain>
    </source>
</reference>
<comment type="function">
    <text evidence="1">This protein is involved in the repair of mismatches in DNA. It is required for dam-dependent methyl-directed DNA mismatch repair. May act as a 'molecular matchmaker', a protein that promotes the formation of a stable complex between two or more DNA-binding proteins in an ATP-dependent manner without itself being part of a final effector complex.</text>
</comment>
<comment type="similarity">
    <text evidence="1">Belongs to the DNA mismatch repair MutL/HexB family.</text>
</comment>
<dbReference type="EMBL" id="AE016877">
    <property type="protein sequence ID" value="AAP10692.1"/>
    <property type="molecule type" value="Genomic_DNA"/>
</dbReference>
<dbReference type="RefSeq" id="NP_833491.1">
    <property type="nucleotide sequence ID" value="NC_004722.1"/>
</dbReference>
<dbReference type="RefSeq" id="WP_000516465.1">
    <property type="nucleotide sequence ID" value="NZ_CP138336.1"/>
</dbReference>
<dbReference type="SMR" id="Q81A26"/>
<dbReference type="STRING" id="226900.BC_3768"/>
<dbReference type="KEGG" id="bce:BC3768"/>
<dbReference type="PATRIC" id="fig|226900.8.peg.3884"/>
<dbReference type="HOGENOM" id="CLU_004131_4_1_9"/>
<dbReference type="OrthoDB" id="9763467at2"/>
<dbReference type="Proteomes" id="UP000001417">
    <property type="component" value="Chromosome"/>
</dbReference>
<dbReference type="GO" id="GO:0032300">
    <property type="term" value="C:mismatch repair complex"/>
    <property type="evidence" value="ECO:0000318"/>
    <property type="project" value="GO_Central"/>
</dbReference>
<dbReference type="GO" id="GO:0005524">
    <property type="term" value="F:ATP binding"/>
    <property type="evidence" value="ECO:0007669"/>
    <property type="project" value="InterPro"/>
</dbReference>
<dbReference type="GO" id="GO:0016887">
    <property type="term" value="F:ATP hydrolysis activity"/>
    <property type="evidence" value="ECO:0000318"/>
    <property type="project" value="GO_Central"/>
</dbReference>
<dbReference type="GO" id="GO:0140664">
    <property type="term" value="F:ATP-dependent DNA damage sensor activity"/>
    <property type="evidence" value="ECO:0007669"/>
    <property type="project" value="InterPro"/>
</dbReference>
<dbReference type="GO" id="GO:0030983">
    <property type="term" value="F:mismatched DNA binding"/>
    <property type="evidence" value="ECO:0007669"/>
    <property type="project" value="InterPro"/>
</dbReference>
<dbReference type="GO" id="GO:0006298">
    <property type="term" value="P:mismatch repair"/>
    <property type="evidence" value="ECO:0000318"/>
    <property type="project" value="GO_Central"/>
</dbReference>
<dbReference type="CDD" id="cd16926">
    <property type="entry name" value="HATPase_MutL-MLH-PMS-like"/>
    <property type="match status" value="1"/>
</dbReference>
<dbReference type="CDD" id="cd00782">
    <property type="entry name" value="MutL_Trans"/>
    <property type="match status" value="1"/>
</dbReference>
<dbReference type="FunFam" id="3.30.1370.100:FF:000004">
    <property type="entry name" value="DNA mismatch repair endonuclease MutL"/>
    <property type="match status" value="1"/>
</dbReference>
<dbReference type="FunFam" id="3.30.230.10:FF:000036">
    <property type="entry name" value="DNA mismatch repair endonuclease MutL"/>
    <property type="match status" value="1"/>
</dbReference>
<dbReference type="FunFam" id="3.30.565.10:FF:000003">
    <property type="entry name" value="DNA mismatch repair endonuclease MutL"/>
    <property type="match status" value="1"/>
</dbReference>
<dbReference type="Gene3D" id="3.30.230.10">
    <property type="match status" value="1"/>
</dbReference>
<dbReference type="Gene3D" id="3.30.565.10">
    <property type="entry name" value="Histidine kinase-like ATPase, C-terminal domain"/>
    <property type="match status" value="1"/>
</dbReference>
<dbReference type="Gene3D" id="3.30.1540.20">
    <property type="entry name" value="MutL, C-terminal domain, dimerisation subdomain"/>
    <property type="match status" value="1"/>
</dbReference>
<dbReference type="Gene3D" id="3.30.1370.100">
    <property type="entry name" value="MutL, C-terminal domain, regulatory subdomain"/>
    <property type="match status" value="1"/>
</dbReference>
<dbReference type="HAMAP" id="MF_00149">
    <property type="entry name" value="DNA_mis_repair"/>
    <property type="match status" value="1"/>
</dbReference>
<dbReference type="InterPro" id="IPR014762">
    <property type="entry name" value="DNA_mismatch_repair_CS"/>
</dbReference>
<dbReference type="InterPro" id="IPR020667">
    <property type="entry name" value="DNA_mismatch_repair_MutL"/>
</dbReference>
<dbReference type="InterPro" id="IPR013507">
    <property type="entry name" value="DNA_mismatch_S5_2-like"/>
</dbReference>
<dbReference type="InterPro" id="IPR036890">
    <property type="entry name" value="HATPase_C_sf"/>
</dbReference>
<dbReference type="InterPro" id="IPR002099">
    <property type="entry name" value="MutL/Mlh/PMS"/>
</dbReference>
<dbReference type="InterPro" id="IPR038973">
    <property type="entry name" value="MutL/Mlh/Pms-like"/>
</dbReference>
<dbReference type="InterPro" id="IPR014790">
    <property type="entry name" value="MutL_C"/>
</dbReference>
<dbReference type="InterPro" id="IPR042120">
    <property type="entry name" value="MutL_C_dimsub"/>
</dbReference>
<dbReference type="InterPro" id="IPR042121">
    <property type="entry name" value="MutL_C_regsub"/>
</dbReference>
<dbReference type="InterPro" id="IPR037198">
    <property type="entry name" value="MutL_C_sf"/>
</dbReference>
<dbReference type="InterPro" id="IPR020568">
    <property type="entry name" value="Ribosomal_Su5_D2-typ_SF"/>
</dbReference>
<dbReference type="InterPro" id="IPR014721">
    <property type="entry name" value="Ribsml_uS5_D2-typ_fold_subgr"/>
</dbReference>
<dbReference type="NCBIfam" id="TIGR00585">
    <property type="entry name" value="mutl"/>
    <property type="match status" value="1"/>
</dbReference>
<dbReference type="NCBIfam" id="NF000950">
    <property type="entry name" value="PRK00095.1-3"/>
    <property type="match status" value="1"/>
</dbReference>
<dbReference type="PANTHER" id="PTHR10073">
    <property type="entry name" value="DNA MISMATCH REPAIR PROTEIN MLH, PMS, MUTL"/>
    <property type="match status" value="1"/>
</dbReference>
<dbReference type="PANTHER" id="PTHR10073:SF12">
    <property type="entry name" value="DNA MISMATCH REPAIR PROTEIN MLH1"/>
    <property type="match status" value="1"/>
</dbReference>
<dbReference type="Pfam" id="PF01119">
    <property type="entry name" value="DNA_mis_repair"/>
    <property type="match status" value="1"/>
</dbReference>
<dbReference type="Pfam" id="PF13589">
    <property type="entry name" value="HATPase_c_3"/>
    <property type="match status" value="1"/>
</dbReference>
<dbReference type="Pfam" id="PF08676">
    <property type="entry name" value="MutL_C"/>
    <property type="match status" value="1"/>
</dbReference>
<dbReference type="SMART" id="SM01340">
    <property type="entry name" value="DNA_mis_repair"/>
    <property type="match status" value="1"/>
</dbReference>
<dbReference type="SMART" id="SM00853">
    <property type="entry name" value="MutL_C"/>
    <property type="match status" value="1"/>
</dbReference>
<dbReference type="SUPFAM" id="SSF55874">
    <property type="entry name" value="ATPase domain of HSP90 chaperone/DNA topoisomerase II/histidine kinase"/>
    <property type="match status" value="1"/>
</dbReference>
<dbReference type="SUPFAM" id="SSF118116">
    <property type="entry name" value="DNA mismatch repair protein MutL"/>
    <property type="match status" value="1"/>
</dbReference>
<dbReference type="SUPFAM" id="SSF54211">
    <property type="entry name" value="Ribosomal protein S5 domain 2-like"/>
    <property type="match status" value="1"/>
</dbReference>
<dbReference type="PROSITE" id="PS00058">
    <property type="entry name" value="DNA_MISMATCH_REPAIR_1"/>
    <property type="match status" value="1"/>
</dbReference>
<accession>Q81A26</accession>
<gene>
    <name evidence="1" type="primary">mutL</name>
    <name type="ordered locus">BC_3768</name>
</gene>
<organism>
    <name type="scientific">Bacillus cereus (strain ATCC 14579 / DSM 31 / CCUG 7414 / JCM 2152 / NBRC 15305 / NCIMB 9373 / NCTC 2599 / NRRL B-3711)</name>
    <dbReference type="NCBI Taxonomy" id="226900"/>
    <lineage>
        <taxon>Bacteria</taxon>
        <taxon>Bacillati</taxon>
        <taxon>Bacillota</taxon>
        <taxon>Bacilli</taxon>
        <taxon>Bacillales</taxon>
        <taxon>Bacillaceae</taxon>
        <taxon>Bacillus</taxon>
        <taxon>Bacillus cereus group</taxon>
    </lineage>
</organism>
<sequence>MGKIRKLDDQLSNLIAAGEVVERPASVVKELVENSIDANSTSIEIHLEEAGLSKIRIIDNGDGIAEEDCIVAFERHATSKIKDENDLFRIRTLGFRGEALPSIASVSELELITSTGDAPGTHLIIKGGDIIKQEKTASRKGTDITVQNLFFNTPARLKYMKTIHTELGNITDIVYRIAMSHPEVSLKLFHNEKKLLHTSGNGDVRQVLASIYSIQVAKKLVPIEAESLDFTIKGYVTLPEVTRASRNYMSTIVNGRYVRNFVLMKAIQQGYHTLLPVGRYPIGFLSIEMDPMLVDVNVHPAKLEVRFSKEQELLKLIEETLQAAFKKIQLIPDAGVTTKKKEKDESVQEQFQFEHAKPKEPSMPDIVLPTGMDAKQEEPQAVKQPPQLWQPPKQEWQPPQSLIREEQSWQPSTKPIIEEPIQEEKSWDSNEEDFELEELEEEVREIKEIEMNGNDLPPLYPIGQMHGTYIFAQNDKGLYMIDQHAAQERINYEYFRDKVGRVAQEVQELLVPYRIDLSLTEFLRVEEQLEELKKVGLFLEQFGHQSFIVRSHPTWFPKGQETEIIDEMMEQVVKLKKVDIKKLREEAAIMMSCKASIKANQYLTNDQIFALLEELRTTTNPYTCPHGRPILVHHSTYELEKMFKRVM</sequence>
<protein>
    <recommendedName>
        <fullName evidence="1">DNA mismatch repair protein MutL</fullName>
    </recommendedName>
</protein>
<feature type="chain" id="PRO_1000009979" description="DNA mismatch repair protein MutL">
    <location>
        <begin position="1"/>
        <end position="647"/>
    </location>
</feature>
<feature type="region of interest" description="Disordered" evidence="2">
    <location>
        <begin position="375"/>
        <end position="395"/>
    </location>
</feature>
<feature type="compositionally biased region" description="Low complexity" evidence="2">
    <location>
        <begin position="383"/>
        <end position="395"/>
    </location>
</feature>
<proteinExistence type="inferred from homology"/>
<evidence type="ECO:0000255" key="1">
    <source>
        <dbReference type="HAMAP-Rule" id="MF_00149"/>
    </source>
</evidence>
<evidence type="ECO:0000256" key="2">
    <source>
        <dbReference type="SAM" id="MobiDB-lite"/>
    </source>
</evidence>
<name>MUTL_BACCR</name>